<dbReference type="EC" id="3.5.4.5" evidence="1"/>
<dbReference type="EMBL" id="CP000503">
    <property type="protein sequence ID" value="ABM25355.1"/>
    <property type="molecule type" value="Genomic_DNA"/>
</dbReference>
<dbReference type="RefSeq" id="WP_011789815.1">
    <property type="nucleotide sequence ID" value="NC_008750.1"/>
</dbReference>
<dbReference type="SMR" id="A1RL10"/>
<dbReference type="KEGG" id="shw:Sputw3181_2531"/>
<dbReference type="HOGENOM" id="CLU_052424_0_0_6"/>
<dbReference type="Proteomes" id="UP000002597">
    <property type="component" value="Chromosome"/>
</dbReference>
<dbReference type="GO" id="GO:0005829">
    <property type="term" value="C:cytosol"/>
    <property type="evidence" value="ECO:0007669"/>
    <property type="project" value="TreeGrafter"/>
</dbReference>
<dbReference type="GO" id="GO:0004126">
    <property type="term" value="F:cytidine deaminase activity"/>
    <property type="evidence" value="ECO:0007669"/>
    <property type="project" value="UniProtKB-UniRule"/>
</dbReference>
<dbReference type="GO" id="GO:0042802">
    <property type="term" value="F:identical protein binding"/>
    <property type="evidence" value="ECO:0007669"/>
    <property type="project" value="UniProtKB-ARBA"/>
</dbReference>
<dbReference type="GO" id="GO:0008270">
    <property type="term" value="F:zinc ion binding"/>
    <property type="evidence" value="ECO:0007669"/>
    <property type="project" value="UniProtKB-UniRule"/>
</dbReference>
<dbReference type="GO" id="GO:0009972">
    <property type="term" value="P:cytidine deamination"/>
    <property type="evidence" value="ECO:0007669"/>
    <property type="project" value="InterPro"/>
</dbReference>
<dbReference type="CDD" id="cd01283">
    <property type="entry name" value="cytidine_deaminase"/>
    <property type="match status" value="1"/>
</dbReference>
<dbReference type="FunFam" id="3.40.140.10:FF:000007">
    <property type="entry name" value="Cytidine deaminase"/>
    <property type="match status" value="1"/>
</dbReference>
<dbReference type="Gene3D" id="3.40.140.10">
    <property type="entry name" value="Cytidine Deaminase, domain 2"/>
    <property type="match status" value="2"/>
</dbReference>
<dbReference type="HAMAP" id="MF_01558">
    <property type="entry name" value="Cyt_deam"/>
    <property type="match status" value="1"/>
</dbReference>
<dbReference type="InterPro" id="IPR016192">
    <property type="entry name" value="APOBEC/CMP_deaminase_Zn-bd"/>
</dbReference>
<dbReference type="InterPro" id="IPR002125">
    <property type="entry name" value="CMP_dCMP_dom"/>
</dbReference>
<dbReference type="InterPro" id="IPR013171">
    <property type="entry name" value="Cyd/dCyd_deaminase_Zn-bd"/>
</dbReference>
<dbReference type="InterPro" id="IPR050202">
    <property type="entry name" value="Cyt/Deoxycyt_deaminase"/>
</dbReference>
<dbReference type="InterPro" id="IPR016193">
    <property type="entry name" value="Cytidine_deaminase-like"/>
</dbReference>
<dbReference type="InterPro" id="IPR020797">
    <property type="entry name" value="Cytidine_deaminase_bacteria"/>
</dbReference>
<dbReference type="NCBIfam" id="NF006537">
    <property type="entry name" value="PRK09027.1"/>
    <property type="match status" value="1"/>
</dbReference>
<dbReference type="PANTHER" id="PTHR11644">
    <property type="entry name" value="CYTIDINE DEAMINASE"/>
    <property type="match status" value="1"/>
</dbReference>
<dbReference type="PANTHER" id="PTHR11644:SF2">
    <property type="entry name" value="CYTIDINE DEAMINASE"/>
    <property type="match status" value="1"/>
</dbReference>
<dbReference type="Pfam" id="PF00383">
    <property type="entry name" value="dCMP_cyt_deam_1"/>
    <property type="match status" value="1"/>
</dbReference>
<dbReference type="Pfam" id="PF08211">
    <property type="entry name" value="dCMP_cyt_deam_2"/>
    <property type="match status" value="1"/>
</dbReference>
<dbReference type="PIRSF" id="PIRSF006334">
    <property type="entry name" value="Cdd_plus_pseudo"/>
    <property type="match status" value="1"/>
</dbReference>
<dbReference type="SUPFAM" id="SSF53927">
    <property type="entry name" value="Cytidine deaminase-like"/>
    <property type="match status" value="2"/>
</dbReference>
<dbReference type="PROSITE" id="PS00903">
    <property type="entry name" value="CYT_DCMP_DEAMINASES_1"/>
    <property type="match status" value="1"/>
</dbReference>
<dbReference type="PROSITE" id="PS51747">
    <property type="entry name" value="CYT_DCMP_DEAMINASES_2"/>
    <property type="match status" value="2"/>
</dbReference>
<protein>
    <recommendedName>
        <fullName evidence="1">Cytidine deaminase</fullName>
        <ecNumber evidence="1">3.5.4.5</ecNumber>
    </recommendedName>
    <alternativeName>
        <fullName evidence="1">Cytidine aminohydrolase</fullName>
        <shortName evidence="1">CDA</shortName>
    </alternativeName>
</protein>
<gene>
    <name evidence="1" type="primary">cdd</name>
    <name type="ordered locus">Sputw3181_2531</name>
</gene>
<comment type="function">
    <text evidence="1">This enzyme scavenges exogenous and endogenous cytidine and 2'-deoxycytidine for UMP synthesis.</text>
</comment>
<comment type="catalytic activity">
    <reaction evidence="1">
        <text>cytidine + H2O + H(+) = uridine + NH4(+)</text>
        <dbReference type="Rhea" id="RHEA:16069"/>
        <dbReference type="ChEBI" id="CHEBI:15377"/>
        <dbReference type="ChEBI" id="CHEBI:15378"/>
        <dbReference type="ChEBI" id="CHEBI:16704"/>
        <dbReference type="ChEBI" id="CHEBI:17562"/>
        <dbReference type="ChEBI" id="CHEBI:28938"/>
        <dbReference type="EC" id="3.5.4.5"/>
    </reaction>
</comment>
<comment type="catalytic activity">
    <reaction evidence="1">
        <text>2'-deoxycytidine + H2O + H(+) = 2'-deoxyuridine + NH4(+)</text>
        <dbReference type="Rhea" id="RHEA:13433"/>
        <dbReference type="ChEBI" id="CHEBI:15377"/>
        <dbReference type="ChEBI" id="CHEBI:15378"/>
        <dbReference type="ChEBI" id="CHEBI:15698"/>
        <dbReference type="ChEBI" id="CHEBI:16450"/>
        <dbReference type="ChEBI" id="CHEBI:28938"/>
        <dbReference type="EC" id="3.5.4.5"/>
    </reaction>
</comment>
<comment type="cofactor">
    <cofactor evidence="1">
        <name>Zn(2+)</name>
        <dbReference type="ChEBI" id="CHEBI:29105"/>
    </cofactor>
    <text evidence="1">Binds 1 zinc ion.</text>
</comment>
<comment type="subunit">
    <text evidence="1">Homodimer.</text>
</comment>
<comment type="similarity">
    <text evidence="1">Belongs to the cytidine and deoxycytidylate deaminase family.</text>
</comment>
<name>CDD_SHESW</name>
<evidence type="ECO:0000255" key="1">
    <source>
        <dbReference type="HAMAP-Rule" id="MF_01558"/>
    </source>
</evidence>
<evidence type="ECO:0000255" key="2">
    <source>
        <dbReference type="PROSITE-ProRule" id="PRU01083"/>
    </source>
</evidence>
<proteinExistence type="inferred from homology"/>
<organism>
    <name type="scientific">Shewanella sp. (strain W3-18-1)</name>
    <dbReference type="NCBI Taxonomy" id="351745"/>
    <lineage>
        <taxon>Bacteria</taxon>
        <taxon>Pseudomonadati</taxon>
        <taxon>Pseudomonadota</taxon>
        <taxon>Gammaproteobacteria</taxon>
        <taxon>Alteromonadales</taxon>
        <taxon>Shewanellaceae</taxon>
        <taxon>Shewanella</taxon>
    </lineage>
</organism>
<sequence>MQDRFIRSITQLPLPLADALIPLLHQNFAGHIDAMQLAKLTLASKMTEAEVLLALLPIAAALAKPPISEFYVGAIAKGKSGDIYMGANLELPGEALFHSVHAEQSAISHAWLSGESQIVDIIVNASPCGHCRQFMNELVDGANITIHLPAQESHSLAYYLPYAFGPKDLNVVSPLLAKQQTEFVLDSSDPMIIEGLDHAGLSYAPYTQSFAAVVLETHDGATYCGRYAENAAFNPSMLPMQMALSNLTRHNREFSDIRRAVLIESSQGKISLVGATMDALHTIAAVELEHIVVDPV</sequence>
<keyword id="KW-0378">Hydrolase</keyword>
<keyword id="KW-0479">Metal-binding</keyword>
<keyword id="KW-0862">Zinc</keyword>
<feature type="chain" id="PRO_1000068968" description="Cytidine deaminase">
    <location>
        <begin position="1"/>
        <end position="296"/>
    </location>
</feature>
<feature type="domain" description="CMP/dCMP-type deaminase 1" evidence="2">
    <location>
        <begin position="47"/>
        <end position="167"/>
    </location>
</feature>
<feature type="domain" description="CMP/dCMP-type deaminase 2" evidence="2">
    <location>
        <begin position="186"/>
        <end position="296"/>
    </location>
</feature>
<feature type="active site" description="Proton donor" evidence="1">
    <location>
        <position position="103"/>
    </location>
</feature>
<feature type="binding site" evidence="1">
    <location>
        <begin position="88"/>
        <end position="90"/>
    </location>
    <ligand>
        <name>substrate</name>
    </ligand>
</feature>
<feature type="binding site" evidence="1">
    <location>
        <position position="101"/>
    </location>
    <ligand>
        <name>Zn(2+)</name>
        <dbReference type="ChEBI" id="CHEBI:29105"/>
        <note>catalytic</note>
    </ligand>
</feature>
<feature type="binding site" evidence="1">
    <location>
        <position position="128"/>
    </location>
    <ligand>
        <name>Zn(2+)</name>
        <dbReference type="ChEBI" id="CHEBI:29105"/>
        <note>catalytic</note>
    </ligand>
</feature>
<feature type="binding site" evidence="1">
    <location>
        <position position="131"/>
    </location>
    <ligand>
        <name>Zn(2+)</name>
        <dbReference type="ChEBI" id="CHEBI:29105"/>
        <note>catalytic</note>
    </ligand>
</feature>
<reference key="1">
    <citation type="submission" date="2006-12" db="EMBL/GenBank/DDBJ databases">
        <title>Complete sequence of Shewanella sp. W3-18-1.</title>
        <authorList>
            <consortium name="US DOE Joint Genome Institute"/>
            <person name="Copeland A."/>
            <person name="Lucas S."/>
            <person name="Lapidus A."/>
            <person name="Barry K."/>
            <person name="Detter J.C."/>
            <person name="Glavina del Rio T."/>
            <person name="Hammon N."/>
            <person name="Israni S."/>
            <person name="Dalin E."/>
            <person name="Tice H."/>
            <person name="Pitluck S."/>
            <person name="Chain P."/>
            <person name="Malfatti S."/>
            <person name="Shin M."/>
            <person name="Vergez L."/>
            <person name="Schmutz J."/>
            <person name="Larimer F."/>
            <person name="Land M."/>
            <person name="Hauser L."/>
            <person name="Kyrpides N."/>
            <person name="Lykidis A."/>
            <person name="Tiedje J."/>
            <person name="Richardson P."/>
        </authorList>
    </citation>
    <scope>NUCLEOTIDE SEQUENCE [LARGE SCALE GENOMIC DNA]</scope>
    <source>
        <strain>W3-18-1</strain>
    </source>
</reference>
<accession>A1RL10</accession>